<proteinExistence type="inferred from homology"/>
<reference key="1">
    <citation type="journal article" date="1994" name="J. Mol. Evol.">
        <title>Mitochondrial DNA of the sea anemone, Metridium senile (Cnidaria): prokaryote-like genes for tRNA(f-Met) and small-subunit ribosomal RNA, and standard genetic code specificities for AGR and ATA codons.</title>
        <authorList>
            <person name="Pont-Kingdon G.A."/>
            <person name="Beagley C.T."/>
            <person name="Okimoto R."/>
            <person name="Wolstenholme D.R."/>
        </authorList>
    </citation>
    <scope>NUCLEOTIDE SEQUENCE [GENOMIC DNA]</scope>
</reference>
<reference key="2">
    <citation type="submission" date="1997-04" db="EMBL/GenBank/DDBJ databases">
        <authorList>
            <person name="Beagley C.T."/>
            <person name="Okimoto R."/>
            <person name="Wolstenholme D.R."/>
        </authorList>
    </citation>
    <scope>NUCLEOTIDE SEQUENCE [GENOMIC DNA]</scope>
    <source>
        <strain>White morph</strain>
    </source>
</reference>
<keyword id="KW-0186">Copper</keyword>
<keyword id="KW-0249">Electron transport</keyword>
<keyword id="KW-0460">Magnesium</keyword>
<keyword id="KW-0472">Membrane</keyword>
<keyword id="KW-0479">Metal-binding</keyword>
<keyword id="KW-0496">Mitochondrion</keyword>
<keyword id="KW-0999">Mitochondrion inner membrane</keyword>
<keyword id="KW-0679">Respiratory chain</keyword>
<keyword id="KW-1278">Translocase</keyword>
<keyword id="KW-0812">Transmembrane</keyword>
<keyword id="KW-1133">Transmembrane helix</keyword>
<keyword id="KW-0813">Transport</keyword>
<evidence type="ECO:0000250" key="1">
    <source>
        <dbReference type="UniProtKB" id="P00410"/>
    </source>
</evidence>
<evidence type="ECO:0000255" key="2"/>
<evidence type="ECO:0000305" key="3"/>
<feature type="chain" id="PRO_0000183633" description="Cytochrome c oxidase subunit 2">
    <location>
        <begin position="1"/>
        <end position="248"/>
    </location>
</feature>
<feature type="topological domain" description="Mitochondrial intermembrane" evidence="2">
    <location>
        <begin position="1"/>
        <end position="43"/>
    </location>
</feature>
<feature type="transmembrane region" description="Helical" evidence="2">
    <location>
        <begin position="44"/>
        <end position="65"/>
    </location>
</feature>
<feature type="topological domain" description="Mitochondrial matrix" evidence="2">
    <location>
        <begin position="66"/>
        <end position="79"/>
    </location>
</feature>
<feature type="transmembrane region" description="Helical" evidence="2">
    <location>
        <begin position="80"/>
        <end position="99"/>
    </location>
</feature>
<feature type="topological domain" description="Mitochondrial intermembrane" evidence="2">
    <location>
        <begin position="100"/>
        <end position="248"/>
    </location>
</feature>
<feature type="binding site" evidence="1">
    <location>
        <position position="180"/>
    </location>
    <ligand>
        <name>Cu cation</name>
        <dbReference type="ChEBI" id="CHEBI:23378"/>
        <label>A1</label>
    </ligand>
</feature>
<feature type="binding site" evidence="1">
    <location>
        <position position="215"/>
    </location>
    <ligand>
        <name>Cu cation</name>
        <dbReference type="ChEBI" id="CHEBI:23378"/>
        <label>A1</label>
    </ligand>
</feature>
<feature type="binding site" evidence="1">
    <location>
        <position position="215"/>
    </location>
    <ligand>
        <name>Cu cation</name>
        <dbReference type="ChEBI" id="CHEBI:23378"/>
        <label>A2</label>
    </ligand>
</feature>
<feature type="binding site" evidence="1">
    <location>
        <position position="217"/>
    </location>
    <ligand>
        <name>Cu cation</name>
        <dbReference type="ChEBI" id="CHEBI:23378"/>
        <label>A2</label>
    </ligand>
</feature>
<feature type="binding site" evidence="1">
    <location>
        <position position="217"/>
    </location>
    <ligand>
        <name>Mg(2+)</name>
        <dbReference type="ChEBI" id="CHEBI:18420"/>
        <note>ligand shared with subunit 1</note>
    </ligand>
</feature>
<feature type="binding site" evidence="1">
    <location>
        <position position="219"/>
    </location>
    <ligand>
        <name>Cu cation</name>
        <dbReference type="ChEBI" id="CHEBI:23378"/>
        <label>A1</label>
    </ligand>
</feature>
<feature type="binding site" evidence="1">
    <location>
        <position position="219"/>
    </location>
    <ligand>
        <name>Cu cation</name>
        <dbReference type="ChEBI" id="CHEBI:23378"/>
        <label>A2</label>
    </ligand>
</feature>
<feature type="binding site" evidence="1">
    <location>
        <position position="223"/>
    </location>
    <ligand>
        <name>Cu cation</name>
        <dbReference type="ChEBI" id="CHEBI:23378"/>
        <label>A2</label>
    </ligand>
</feature>
<feature type="binding site" evidence="1">
    <location>
        <position position="226"/>
    </location>
    <ligand>
        <name>Cu cation</name>
        <dbReference type="ChEBI" id="CHEBI:23378"/>
        <label>A1</label>
    </ligand>
</feature>
<sequence>MTNLLNNWLIINQFGYDLPEPWQLGLQDAAHPVMEEIIFFHDQVMFILIIIITTVLWLIVKALSGKAYHRYLVDGTLLEIIWTIVPAIILILIAFPSLKLLYLMDEVMDPALTIKAIGHQWYWSYEYSDYQTETLEFDSYMVPTSELNKGDFRLLEVDNRLVVPINTHVRVLVTGADVLHSFAVPALAVKMDAIPGRLNQTGFFIKRPGIFYGQCSEICGANHSFMPIVIEAVSLDKYINWVLSGSDE</sequence>
<accession>O47496</accession>
<protein>
    <recommendedName>
        <fullName>Cytochrome c oxidase subunit 2</fullName>
        <ecNumber>7.1.1.9</ecNumber>
    </recommendedName>
    <alternativeName>
        <fullName>Cytochrome c oxidase polypeptide II</fullName>
    </alternativeName>
</protein>
<name>COX2_METSE</name>
<gene>
    <name type="primary">COII</name>
</gene>
<organism>
    <name type="scientific">Metridium senile</name>
    <name type="common">Brown sea anemone</name>
    <name type="synonym">Frilled sea anemone</name>
    <dbReference type="NCBI Taxonomy" id="6116"/>
    <lineage>
        <taxon>Eukaryota</taxon>
        <taxon>Metazoa</taxon>
        <taxon>Cnidaria</taxon>
        <taxon>Anthozoa</taxon>
        <taxon>Hexacorallia</taxon>
        <taxon>Actiniaria</taxon>
        <taxon>Nynantheae</taxon>
        <taxon>Metridiidae</taxon>
        <taxon>Metridium</taxon>
    </lineage>
</organism>
<comment type="function">
    <text evidence="1">Component of the cytochrome c oxidase, the last enzyme in the mitochondrial electron transport chain which drives oxidative phosphorylation. The respiratory chain contains 3 multisubunit complexes succinate dehydrogenase (complex II, CII), ubiquinol-cytochrome c oxidoreductase (cytochrome b-c1 complex, complex III, CIII) and cytochrome c oxidase (complex IV, CIV), that cooperate to transfer electrons derived from NADH and succinate to molecular oxygen, creating an electrochemical gradient over the inner membrane that drives transmembrane transport and the ATP synthase. Cytochrome c oxidase is the component of the respiratory chain that catalyzes the reduction of oxygen to water. Electrons originating from reduced cytochrome c in the intermembrane space (IMS) are transferred via the dinuclear copper A center (CU(A)) of subunit 2 and heme A of subunit 1 to the active site in subunit 1, a binuclear center (BNC) formed by heme A3 and copper B (CU(B)). The BNC reduces molecular oxygen to 2 water molecules using 4 electrons from cytochrome c in the IMS and 4 protons from the mitochondrial matrix.</text>
</comment>
<comment type="catalytic activity">
    <reaction evidence="1">
        <text>4 Fe(II)-[cytochrome c] + O2 + 8 H(+)(in) = 4 Fe(III)-[cytochrome c] + 2 H2O + 4 H(+)(out)</text>
        <dbReference type="Rhea" id="RHEA:11436"/>
        <dbReference type="Rhea" id="RHEA-COMP:10350"/>
        <dbReference type="Rhea" id="RHEA-COMP:14399"/>
        <dbReference type="ChEBI" id="CHEBI:15377"/>
        <dbReference type="ChEBI" id="CHEBI:15378"/>
        <dbReference type="ChEBI" id="CHEBI:15379"/>
        <dbReference type="ChEBI" id="CHEBI:29033"/>
        <dbReference type="ChEBI" id="CHEBI:29034"/>
        <dbReference type="EC" id="7.1.1.9"/>
    </reaction>
    <physiologicalReaction direction="left-to-right" evidence="1">
        <dbReference type="Rhea" id="RHEA:11437"/>
    </physiologicalReaction>
</comment>
<comment type="cofactor">
    <cofactor evidence="1">
        <name>Cu cation</name>
        <dbReference type="ChEBI" id="CHEBI:23378"/>
    </cofactor>
    <text evidence="1">Binds a dinuclear copper A center per subunit.</text>
</comment>
<comment type="subunit">
    <text evidence="1">Component of the cytochrome c oxidase (complex IV, CIV), a multisubunit enzyme composed of a catalytic core of 3 subunits and several supernumerary subunits. The complex exists as a monomer or a dimer and forms supercomplexes (SCs) in the inner mitochondrial membrane with ubiquinol-cytochrome c oxidoreductase (cytochrome b-c1 complex, complex III, CIII).</text>
</comment>
<comment type="subcellular location">
    <subcellularLocation>
        <location evidence="1">Mitochondrion inner membrane</location>
        <topology evidence="1">Multi-pass membrane protein</topology>
    </subcellularLocation>
</comment>
<comment type="similarity">
    <text evidence="3">Belongs to the cytochrome c oxidase subunit 2 family.</text>
</comment>
<geneLocation type="mitochondrion"/>
<dbReference type="EC" id="7.1.1.9"/>
<dbReference type="EMBL" id="S75445">
    <property type="protein sequence ID" value="AAB32498.1"/>
    <property type="molecule type" value="Genomic_DNA"/>
</dbReference>
<dbReference type="EMBL" id="AF000023">
    <property type="protein sequence ID" value="AAC04639.1"/>
    <property type="molecule type" value="Genomic_DNA"/>
</dbReference>
<dbReference type="PIR" id="T11893">
    <property type="entry name" value="T11893"/>
</dbReference>
<dbReference type="SMR" id="O47496"/>
<dbReference type="CTD" id="4513"/>
<dbReference type="GO" id="GO:0005743">
    <property type="term" value="C:mitochondrial inner membrane"/>
    <property type="evidence" value="ECO:0007669"/>
    <property type="project" value="UniProtKB-SubCell"/>
</dbReference>
<dbReference type="GO" id="GO:0005507">
    <property type="term" value="F:copper ion binding"/>
    <property type="evidence" value="ECO:0007669"/>
    <property type="project" value="InterPro"/>
</dbReference>
<dbReference type="GO" id="GO:0004129">
    <property type="term" value="F:cytochrome-c oxidase activity"/>
    <property type="evidence" value="ECO:0007669"/>
    <property type="project" value="UniProtKB-EC"/>
</dbReference>
<dbReference type="GO" id="GO:0042773">
    <property type="term" value="P:ATP synthesis coupled electron transport"/>
    <property type="evidence" value="ECO:0007669"/>
    <property type="project" value="TreeGrafter"/>
</dbReference>
<dbReference type="CDD" id="cd13912">
    <property type="entry name" value="CcO_II_C"/>
    <property type="match status" value="1"/>
</dbReference>
<dbReference type="FunFam" id="2.60.40.420:FF:000001">
    <property type="entry name" value="Cytochrome c oxidase subunit 2"/>
    <property type="match status" value="1"/>
</dbReference>
<dbReference type="Gene3D" id="1.10.287.90">
    <property type="match status" value="1"/>
</dbReference>
<dbReference type="Gene3D" id="2.60.40.420">
    <property type="entry name" value="Cupredoxins - blue copper proteins"/>
    <property type="match status" value="1"/>
</dbReference>
<dbReference type="InterPro" id="IPR045187">
    <property type="entry name" value="CcO_II"/>
</dbReference>
<dbReference type="InterPro" id="IPR002429">
    <property type="entry name" value="CcO_II-like_C"/>
</dbReference>
<dbReference type="InterPro" id="IPR034210">
    <property type="entry name" value="CcO_II_C"/>
</dbReference>
<dbReference type="InterPro" id="IPR001505">
    <property type="entry name" value="Copper_CuA"/>
</dbReference>
<dbReference type="InterPro" id="IPR008972">
    <property type="entry name" value="Cupredoxin"/>
</dbReference>
<dbReference type="InterPro" id="IPR014222">
    <property type="entry name" value="Cyt_c_oxidase_su2"/>
</dbReference>
<dbReference type="InterPro" id="IPR011759">
    <property type="entry name" value="Cyt_c_oxidase_su2_TM_dom"/>
</dbReference>
<dbReference type="InterPro" id="IPR036257">
    <property type="entry name" value="Cyt_c_oxidase_su2_TM_sf"/>
</dbReference>
<dbReference type="NCBIfam" id="TIGR02866">
    <property type="entry name" value="CoxB"/>
    <property type="match status" value="1"/>
</dbReference>
<dbReference type="PANTHER" id="PTHR22888:SF9">
    <property type="entry name" value="CYTOCHROME C OXIDASE SUBUNIT 2"/>
    <property type="match status" value="1"/>
</dbReference>
<dbReference type="PANTHER" id="PTHR22888">
    <property type="entry name" value="CYTOCHROME C OXIDASE, SUBUNIT II"/>
    <property type="match status" value="1"/>
</dbReference>
<dbReference type="Pfam" id="PF00116">
    <property type="entry name" value="COX2"/>
    <property type="match status" value="1"/>
</dbReference>
<dbReference type="Pfam" id="PF02790">
    <property type="entry name" value="COX2_TM"/>
    <property type="match status" value="1"/>
</dbReference>
<dbReference type="PRINTS" id="PR01166">
    <property type="entry name" value="CYCOXIDASEII"/>
</dbReference>
<dbReference type="SUPFAM" id="SSF49503">
    <property type="entry name" value="Cupredoxins"/>
    <property type="match status" value="1"/>
</dbReference>
<dbReference type="SUPFAM" id="SSF81464">
    <property type="entry name" value="Cytochrome c oxidase subunit II-like, transmembrane region"/>
    <property type="match status" value="1"/>
</dbReference>
<dbReference type="PROSITE" id="PS00078">
    <property type="entry name" value="COX2"/>
    <property type="match status" value="1"/>
</dbReference>
<dbReference type="PROSITE" id="PS50857">
    <property type="entry name" value="COX2_CUA"/>
    <property type="match status" value="1"/>
</dbReference>
<dbReference type="PROSITE" id="PS50999">
    <property type="entry name" value="COX2_TM"/>
    <property type="match status" value="1"/>
</dbReference>